<reference key="1">
    <citation type="journal article" date="1996" name="Neuroendocrinology">
        <title>Modulation of a novel RNA in brain neurons by glucocorticoid and mineralocorticoid receptors.</title>
        <authorList>
            <person name="Masters J.N."/>
            <person name="Cotman S.L."/>
            <person name="Osterburg H.H."/>
            <person name="Nichols N.R."/>
            <person name="Finch C.E."/>
        </authorList>
    </citation>
    <scope>NUCLEOTIDE SEQUENCE [MRNA] (ISOFORM 2)</scope>
    <scope>TISSUE SPECIFICITY</scope>
    <scope>INDUCTION</scope>
    <source>
        <strain>Fischer 344</strain>
        <tissue>Brain</tissue>
    </source>
</reference>
<reference key="2">
    <citation type="journal article" date="1996" name="J. Mol. Neurosci.">
        <title>CR16, a novel proline-rich protein expressed in rat brain neurons, binds to SH3 domains and is a MAP kinase substrate.</title>
        <authorList>
            <person name="Weiler M.C."/>
            <person name="Smith J.L."/>
            <person name="Masters J.N."/>
        </authorList>
    </citation>
    <scope>NUCLEOTIDE SEQUENCE [GENOMIC DNA / MRNA] (ISOFORM 1)</scope>
    <source>
        <strain>Fischer 344</strain>
        <tissue>Liver</tissue>
    </source>
</reference>
<reference key="3">
    <citation type="journal article" date="1990" name="Brain Res. Bull.">
        <title>Changes in gene expression in hippocampus in response to glucocorticoids and stress.</title>
        <authorList>
            <person name="Nichols N.R."/>
            <person name="Masters J.N."/>
            <person name="Finch C.E."/>
        </authorList>
    </citation>
    <scope>INDUCTION</scope>
</reference>
<reference key="4">
    <citation type="journal article" date="2001" name="Proc. Natl. Acad. Sci. U.S.A.">
        <title>CR16 forms a complex with N-WASP in brain and is a novel member of a conserved proline-rich actin-binding protein family.</title>
        <authorList>
            <person name="Ho H.-Y.H."/>
            <person name="Rohatgi R."/>
            <person name="Ma L."/>
            <person name="Kirschner M.W."/>
        </authorList>
    </citation>
    <scope>INTERACTION WITH WASL AND ACTIN</scope>
    <scope>SUBCELLULAR LOCATION</scope>
    <scope>TISSUE SPECIFICITY</scope>
</reference>
<reference key="5">
    <citation type="journal article" date="2005" name="FEBS Lett.">
        <title>The verprolin family of proteins: regulators of cell morphogenesis and endocytosis.</title>
        <authorList>
            <person name="Aspenstroem P."/>
        </authorList>
    </citation>
    <scope>DOMAIN WH2</scope>
    <scope>KLKR MOTIF</scope>
    <scope>PROFILIN-BINDING MOTIF</scope>
</reference>
<reference key="6">
    <citation type="journal article" date="2007" name="Biochem. Biophys. Res. Commun.">
        <title>Actin binding and proline rich motifs of CR16 play redundant role in growth of vrp1Delta cells.</title>
        <authorList>
            <person name="Meng L."/>
            <person name="Rajmohan R."/>
            <person name="Yu S."/>
            <person name="Thanabalu T."/>
        </authorList>
    </citation>
    <scope>FUNCTION</scope>
    <scope>MUTAGENESIS OF 58-ARG--LYS-61</scope>
</reference>
<reference key="7">
    <citation type="journal article" date="2012" name="Nat. Commun.">
        <title>Quantitative maps of protein phosphorylation sites across 14 different rat organs and tissues.</title>
        <authorList>
            <person name="Lundby A."/>
            <person name="Secher A."/>
            <person name="Lage K."/>
            <person name="Nordsborg N.B."/>
            <person name="Dmytriyev A."/>
            <person name="Lundby C."/>
            <person name="Olsen J.V."/>
        </authorList>
    </citation>
    <scope>PHOSPHORYLATION [LARGE SCALE ANALYSIS] AT SER-150</scope>
    <scope>IDENTIFICATION BY MASS SPECTROMETRY [LARGE SCALE ANALYSIS]</scope>
</reference>
<proteinExistence type="evidence at protein level"/>
<name>WIPF3_RAT</name>
<organism>
    <name type="scientific">Rattus norvegicus</name>
    <name type="common">Rat</name>
    <dbReference type="NCBI Taxonomy" id="10116"/>
    <lineage>
        <taxon>Eukaryota</taxon>
        <taxon>Metazoa</taxon>
        <taxon>Chordata</taxon>
        <taxon>Craniata</taxon>
        <taxon>Vertebrata</taxon>
        <taxon>Euteleostomi</taxon>
        <taxon>Mammalia</taxon>
        <taxon>Eutheria</taxon>
        <taxon>Euarchontoglires</taxon>
        <taxon>Glires</taxon>
        <taxon>Rodentia</taxon>
        <taxon>Myomorpha</taxon>
        <taxon>Muroidea</taxon>
        <taxon>Muridae</taxon>
        <taxon>Murinae</taxon>
        <taxon>Rattus</taxon>
    </lineage>
</organism>
<protein>
    <recommendedName>
        <fullName>WAS/WASL-interacting protein family member 3</fullName>
    </recommendedName>
    <alternativeName>
        <fullName>Corticosteroids and regional expression protein 16</fullName>
    </alternativeName>
</protein>
<gene>
    <name type="primary">Wipf3</name>
    <name type="synonym">Cr16</name>
</gene>
<comment type="function">
    <text evidence="1 7">May have a role in spermatogenesis (By similarity). May be a regulator of cytoskeletal organization.</text>
</comment>
<comment type="subunit">
    <text evidence="5">Isoform 1 interacts with WASL (via WH1 domain), and monomeric and filamentous actin.</text>
</comment>
<comment type="subcellular location">
    <subcellularLocation>
        <location evidence="5">Cytoplasm</location>
    </subcellularLocation>
    <text>In hippocampal neurons colocalizes with WASL in the cell body, axons and the growth cone.</text>
</comment>
<comment type="alternative products">
    <event type="alternative splicing"/>
    <isoform>
        <id>Q9Z0G8-1</id>
        <name>1</name>
        <sequence type="displayed"/>
    </isoform>
    <isoform>
        <id>Q9Z0G8-2</id>
        <name>2</name>
        <sequence type="described" ref="VSP_034031"/>
    </isoform>
</comment>
<comment type="tissue specificity">
    <text evidence="5 9">Detected mainly in brain and at lower levels in heart and lung (at protein level). Also detected in testis but not in kidney, liver or spleen.</text>
</comment>
<comment type="induction">
    <text evidence="8 9">By aldosterone, corticosterone and RU28362 in hippocampus. By corticosterone and RU28362 in cortex. The response to corticosterone is slow. Does not respond to vibratory stress. May be regulated by both the mineralocorticoid receptor and glucocorticoid receptor.</text>
</comment>
<comment type="domain">
    <text evidence="6">The WH2 domain is found in a number of putative actin-binding proteins.</text>
</comment>
<comment type="domain">
    <text evidence="6">The profilin-binding motif has been implicated in the interaction with profilin and SH3 domains.</text>
</comment>
<comment type="domain">
    <text evidence="6">The KLKR motif is essential for G-actin binding and for actin polymerization.</text>
</comment>
<comment type="miscellaneous">
    <text>Suppress the growth and endocytosis defect of yeast lacking VRP1 without correcting the actin patch polarization defect.</text>
</comment>
<comment type="similarity">
    <text evidence="11">Belongs to the verprolin family.</text>
</comment>
<dbReference type="EMBL" id="U25281">
    <property type="protein sequence ID" value="AAA87791.1"/>
    <property type="molecule type" value="mRNA"/>
</dbReference>
<dbReference type="EMBL" id="U31159">
    <property type="protein sequence ID" value="AAC99858.1"/>
    <property type="molecule type" value="mRNA"/>
</dbReference>
<dbReference type="EMBL" id="U31168">
    <property type="protein sequence ID" value="AAC99859.1"/>
    <property type="molecule type" value="Genomic_DNA"/>
</dbReference>
<dbReference type="EMBL" id="U31161">
    <property type="protein sequence ID" value="AAC99859.1"/>
    <property type="status" value="JOINED"/>
    <property type="molecule type" value="Genomic_DNA"/>
</dbReference>
<dbReference type="EMBL" id="U31162">
    <property type="protein sequence ID" value="AAC99859.1"/>
    <property type="status" value="JOINED"/>
    <property type="molecule type" value="Genomic_DNA"/>
</dbReference>
<dbReference type="EMBL" id="U31163">
    <property type="protein sequence ID" value="AAC99859.1"/>
    <property type="status" value="JOINED"/>
    <property type="molecule type" value="Genomic_DNA"/>
</dbReference>
<dbReference type="EMBL" id="U31164">
    <property type="protein sequence ID" value="AAC99859.1"/>
    <property type="status" value="JOINED"/>
    <property type="molecule type" value="Genomic_DNA"/>
</dbReference>
<dbReference type="EMBL" id="U31165">
    <property type="protein sequence ID" value="AAC99859.1"/>
    <property type="status" value="JOINED"/>
    <property type="molecule type" value="Genomic_DNA"/>
</dbReference>
<dbReference type="EMBL" id="U31166">
    <property type="protein sequence ID" value="AAC99859.1"/>
    <property type="status" value="JOINED"/>
    <property type="molecule type" value="Genomic_DNA"/>
</dbReference>
<dbReference type="EMBL" id="U31167">
    <property type="protein sequence ID" value="AAC99859.1"/>
    <property type="status" value="JOINED"/>
    <property type="molecule type" value="Genomic_DNA"/>
</dbReference>
<dbReference type="RefSeq" id="NP_001385659.1">
    <molecule id="Q9Z0G8-1"/>
    <property type="nucleotide sequence ID" value="NM_001398730.1"/>
</dbReference>
<dbReference type="RefSeq" id="NP_671744.1">
    <molecule id="Q9Z0G8-2"/>
    <property type="nucleotide sequence ID" value="NM_147211.3"/>
</dbReference>
<dbReference type="RefSeq" id="XP_008761099.1">
    <property type="nucleotide sequence ID" value="XM_008762877.2"/>
</dbReference>
<dbReference type="CORUM" id="Q9Z0G8"/>
<dbReference type="ELM" id="Q9Z0G8"/>
<dbReference type="FunCoup" id="Q9Z0G8">
    <property type="interactions" value="295"/>
</dbReference>
<dbReference type="STRING" id="10116.ENSRNOP00000064597"/>
<dbReference type="GlyGen" id="Q9Z0G8">
    <property type="glycosylation" value="3 sites"/>
</dbReference>
<dbReference type="iPTMnet" id="Q9Z0G8"/>
<dbReference type="PhosphoSitePlus" id="Q9Z0G8"/>
<dbReference type="PaxDb" id="10116-ENSRNOP00000012747"/>
<dbReference type="Ensembl" id="ENSRNOT00000012755.7">
    <molecule id="Q9Z0G8-2"/>
    <property type="protein sequence ID" value="ENSRNOP00000012755.5"/>
    <property type="gene ID" value="ENSRNOG00000009571.8"/>
</dbReference>
<dbReference type="GeneID" id="259242"/>
<dbReference type="KEGG" id="rno:259242"/>
<dbReference type="UCSC" id="RGD:708559">
    <molecule id="Q9Z0G8-1"/>
    <property type="organism name" value="rat"/>
</dbReference>
<dbReference type="AGR" id="RGD:708559"/>
<dbReference type="CTD" id="644150"/>
<dbReference type="RGD" id="708559">
    <property type="gene designation" value="Wipf3"/>
</dbReference>
<dbReference type="VEuPathDB" id="HostDB:ENSRNOG00000009571"/>
<dbReference type="eggNOG" id="KOG4462">
    <property type="taxonomic scope" value="Eukaryota"/>
</dbReference>
<dbReference type="GeneTree" id="ENSGT00940000160267"/>
<dbReference type="HOGENOM" id="CLU_039513_1_0_1"/>
<dbReference type="InParanoid" id="Q9Z0G8"/>
<dbReference type="PhylomeDB" id="Q9Z0G8"/>
<dbReference type="Reactome" id="R-RNO-2029482">
    <property type="pathway name" value="Regulation of actin dynamics for phagocytic cup formation"/>
</dbReference>
<dbReference type="Reactome" id="R-RNO-5663213">
    <property type="pathway name" value="RHO GTPases Activate WASPs and WAVEs"/>
</dbReference>
<dbReference type="PRO" id="PR:Q9Z0G8"/>
<dbReference type="Proteomes" id="UP000002494">
    <property type="component" value="Chromosome 4"/>
</dbReference>
<dbReference type="Bgee" id="ENSRNOG00000009571">
    <property type="expression patterns" value="Expressed in Ammon's horn and 20 other cell types or tissues"/>
</dbReference>
<dbReference type="GO" id="GO:0005829">
    <property type="term" value="C:cytosol"/>
    <property type="evidence" value="ECO:0007669"/>
    <property type="project" value="GOC"/>
</dbReference>
<dbReference type="GO" id="GO:0005769">
    <property type="term" value="C:early endosome"/>
    <property type="evidence" value="ECO:0000318"/>
    <property type="project" value="GO_Central"/>
</dbReference>
<dbReference type="GO" id="GO:0055037">
    <property type="term" value="C:recycling endosome"/>
    <property type="evidence" value="ECO:0000318"/>
    <property type="project" value="GO_Central"/>
</dbReference>
<dbReference type="GO" id="GO:0045202">
    <property type="term" value="C:synapse"/>
    <property type="evidence" value="ECO:0000266"/>
    <property type="project" value="RGD"/>
</dbReference>
<dbReference type="GO" id="GO:0071203">
    <property type="term" value="C:WASH complex"/>
    <property type="evidence" value="ECO:0000318"/>
    <property type="project" value="GO_Central"/>
</dbReference>
<dbReference type="GO" id="GO:0003779">
    <property type="term" value="F:actin binding"/>
    <property type="evidence" value="ECO:0007669"/>
    <property type="project" value="UniProtKB-KW"/>
</dbReference>
<dbReference type="GO" id="GO:0043014">
    <property type="term" value="F:alpha-tubulin binding"/>
    <property type="evidence" value="ECO:0000318"/>
    <property type="project" value="GO_Central"/>
</dbReference>
<dbReference type="GO" id="GO:0043015">
    <property type="term" value="F:gamma-tubulin binding"/>
    <property type="evidence" value="ECO:0000318"/>
    <property type="project" value="GO_Central"/>
</dbReference>
<dbReference type="GO" id="GO:0017124">
    <property type="term" value="F:SH3 domain binding"/>
    <property type="evidence" value="ECO:0000315"/>
    <property type="project" value="RGD"/>
</dbReference>
<dbReference type="GO" id="GO:0034314">
    <property type="term" value="P:Arp2/3 complex-mediated actin nucleation"/>
    <property type="evidence" value="ECO:0000318"/>
    <property type="project" value="GO_Central"/>
</dbReference>
<dbReference type="GO" id="GO:0030154">
    <property type="term" value="P:cell differentiation"/>
    <property type="evidence" value="ECO:0007669"/>
    <property type="project" value="UniProtKB-KW"/>
</dbReference>
<dbReference type="GO" id="GO:0032456">
    <property type="term" value="P:endocytic recycling"/>
    <property type="evidence" value="ECO:0000318"/>
    <property type="project" value="GO_Central"/>
</dbReference>
<dbReference type="GO" id="GO:0006887">
    <property type="term" value="P:exocytosis"/>
    <property type="evidence" value="ECO:0000318"/>
    <property type="project" value="GO_Central"/>
</dbReference>
<dbReference type="GO" id="GO:0042147">
    <property type="term" value="P:retrograde transport, endosome to Golgi"/>
    <property type="evidence" value="ECO:0000318"/>
    <property type="project" value="GO_Central"/>
</dbReference>
<dbReference type="GO" id="GO:0007283">
    <property type="term" value="P:spermatogenesis"/>
    <property type="evidence" value="ECO:0007669"/>
    <property type="project" value="UniProtKB-KW"/>
</dbReference>
<dbReference type="CDD" id="cd22077">
    <property type="entry name" value="WH2_WAS_WASL-2_3"/>
    <property type="match status" value="1"/>
</dbReference>
<dbReference type="InterPro" id="IPR028290">
    <property type="entry name" value="WASH1"/>
</dbReference>
<dbReference type="InterPro" id="IPR003124">
    <property type="entry name" value="WH2_dom"/>
</dbReference>
<dbReference type="PANTHER" id="PTHR23331">
    <property type="entry name" value="CXYORF1"/>
    <property type="match status" value="1"/>
</dbReference>
<dbReference type="PANTHER" id="PTHR23331:SF4">
    <property type="entry name" value="WAS_WASL-INTERACTING PROTEIN FAMILY MEMBER 3"/>
    <property type="match status" value="1"/>
</dbReference>
<dbReference type="Pfam" id="PF02205">
    <property type="entry name" value="WH2"/>
    <property type="match status" value="1"/>
</dbReference>
<dbReference type="PRINTS" id="PR01217">
    <property type="entry name" value="PRICHEXTENSN"/>
</dbReference>
<dbReference type="SMART" id="SM00246">
    <property type="entry name" value="WH2"/>
    <property type="match status" value="1"/>
</dbReference>
<dbReference type="PROSITE" id="PS51082">
    <property type="entry name" value="WH2"/>
    <property type="match status" value="1"/>
</dbReference>
<sequence>MPVPPPPPPPLPPPPPPLGAPPPPPPPGPPISTDAPSLRKSDLKGRSALLADIQQGTRLRKVTQINDRSAPQIESSKGTSKEGGAAGSNARGGSTPPALGDLFAGGFPVLRPAGQRDVAGGKTGQGPGSRAPSPRLPTKAISGPLPAPASPRLGNASDTHSSARPVPPRPSVPAPPPPTTPPPPPPPPPPPPPPPLPPASPIKAPSVSPPVPPTKGNPSAVPAPIPCVPPLPPPPPTPPPLPPASALSEKAVRPQLAPLHLPPIPPPLPLLPPYGYPALHSEPSSPAQDVREPPAPPPPPPPPPPPPPPPLPTYASCSPRAAVAPPPPPLPGSSNSGSETPPPLPPKSPSFQTQKALPTPPGAPGPQIILQKKRRGPGAGGGKLNPPPAPPARSPTTELSSKTQQPGGQLRNGGQHVIDDFESKFTFHSMEDFPPPDEYKPGQKIYPSKVPRSRTPGSWLQAEAAGQSSDDIKTRNSQLSLKALR</sequence>
<feature type="chain" id="PRO_0000337999" description="WAS/WASL-interacting protein family member 3">
    <location>
        <begin position="1"/>
        <end position="485"/>
    </location>
</feature>
<feature type="domain" description="WH2" evidence="3">
    <location>
        <begin position="45"/>
        <end position="62"/>
    </location>
</feature>
<feature type="region of interest" description="Disordered" evidence="4">
    <location>
        <begin position="1"/>
        <end position="485"/>
    </location>
</feature>
<feature type="short sequence motif" description="Profilin-binding motif">
    <location>
        <begin position="3"/>
        <end position="8"/>
    </location>
</feature>
<feature type="short sequence motif" description="Profilin-binding motif">
    <location>
        <begin position="11"/>
        <end position="16"/>
    </location>
</feature>
<feature type="short sequence motif" description="Profilin-binding motif">
    <location>
        <begin position="20"/>
        <end position="25"/>
    </location>
</feature>
<feature type="short sequence motif" description="RLRK">
    <location>
        <begin position="58"/>
        <end position="61"/>
    </location>
</feature>
<feature type="short sequence motif" description="WASP-binding motif">
    <location>
        <begin position="426"/>
        <end position="450"/>
    </location>
</feature>
<feature type="compositionally biased region" description="Pro residues" evidence="4">
    <location>
        <begin position="1"/>
        <end position="30"/>
    </location>
</feature>
<feature type="compositionally biased region" description="Polar residues" evidence="4">
    <location>
        <begin position="63"/>
        <end position="78"/>
    </location>
</feature>
<feature type="compositionally biased region" description="Pro residues" evidence="4">
    <location>
        <begin position="165"/>
        <end position="200"/>
    </location>
</feature>
<feature type="compositionally biased region" description="Pro residues" evidence="4">
    <location>
        <begin position="207"/>
        <end position="243"/>
    </location>
</feature>
<feature type="compositionally biased region" description="Low complexity" evidence="4">
    <location>
        <begin position="244"/>
        <end position="259"/>
    </location>
</feature>
<feature type="compositionally biased region" description="Pro residues" evidence="4">
    <location>
        <begin position="260"/>
        <end position="275"/>
    </location>
</feature>
<feature type="compositionally biased region" description="Pro residues" evidence="4">
    <location>
        <begin position="293"/>
        <end position="312"/>
    </location>
</feature>
<feature type="compositionally biased region" description="Polar residues" evidence="4">
    <location>
        <begin position="396"/>
        <end position="407"/>
    </location>
</feature>
<feature type="compositionally biased region" description="Basic and acidic residues" evidence="4">
    <location>
        <begin position="417"/>
        <end position="441"/>
    </location>
</feature>
<feature type="compositionally biased region" description="Polar residues" evidence="4">
    <location>
        <begin position="475"/>
        <end position="485"/>
    </location>
</feature>
<feature type="modified residue" description="Asymmetric dimethylarginine" evidence="2">
    <location>
        <position position="46"/>
    </location>
</feature>
<feature type="modified residue" description="Phosphoserine" evidence="12">
    <location>
        <position position="150"/>
    </location>
</feature>
<feature type="modified residue" description="Phosphoserine" evidence="2">
    <location>
        <position position="208"/>
    </location>
</feature>
<feature type="modified residue" description="Phosphoserine" evidence="2">
    <location>
        <position position="394"/>
    </location>
</feature>
<feature type="splice variant" id="VSP_034031" description="In isoform 2." evidence="10">
    <original>DDFESKFTFHSMEDFPPPDEYKPGQKIYPSKVPRS</original>
    <variation>G</variation>
    <location>
        <begin position="419"/>
        <end position="453"/>
    </location>
</feature>
<feature type="mutagenesis site" description="Does not abolish the ability to suppress the growth defect of yeast lacking VRP1." evidence="7">
    <original>RLRK</original>
    <variation>AAAA</variation>
    <location>
        <begin position="58"/>
        <end position="61"/>
    </location>
</feature>
<keyword id="KW-0009">Actin-binding</keyword>
<keyword id="KW-0025">Alternative splicing</keyword>
<keyword id="KW-0963">Cytoplasm</keyword>
<keyword id="KW-0217">Developmental protein</keyword>
<keyword id="KW-0221">Differentiation</keyword>
<keyword id="KW-0488">Methylation</keyword>
<keyword id="KW-0597">Phosphoprotein</keyword>
<keyword id="KW-1185">Reference proteome</keyword>
<keyword id="KW-0744">Spermatogenesis</keyword>
<accession>Q9Z0G8</accession>
<accession>Q62775</accession>
<evidence type="ECO:0000250" key="1"/>
<evidence type="ECO:0000250" key="2">
    <source>
        <dbReference type="UniProtKB" id="A6NGB9"/>
    </source>
</evidence>
<evidence type="ECO:0000255" key="3">
    <source>
        <dbReference type="PROSITE-ProRule" id="PRU00406"/>
    </source>
</evidence>
<evidence type="ECO:0000256" key="4">
    <source>
        <dbReference type="SAM" id="MobiDB-lite"/>
    </source>
</evidence>
<evidence type="ECO:0000269" key="5">
    <source>
    </source>
</evidence>
<evidence type="ECO:0000269" key="6">
    <source>
    </source>
</evidence>
<evidence type="ECO:0000269" key="7">
    <source>
    </source>
</evidence>
<evidence type="ECO:0000269" key="8">
    <source>
    </source>
</evidence>
<evidence type="ECO:0000269" key="9">
    <source>
    </source>
</evidence>
<evidence type="ECO:0000303" key="10">
    <source>
    </source>
</evidence>
<evidence type="ECO:0000305" key="11"/>
<evidence type="ECO:0007744" key="12">
    <source>
    </source>
</evidence>